<evidence type="ECO:0000255" key="1"/>
<evidence type="ECO:0000269" key="2">
    <source>
    </source>
</evidence>
<evidence type="ECO:0000303" key="3">
    <source>
    </source>
</evidence>
<evidence type="ECO:0000305" key="4"/>
<evidence type="ECO:0000305" key="5">
    <source>
    </source>
</evidence>
<comment type="function">
    <text evidence="2">Secreted effector that acts as an elicitor that induces cell death in host plant cells.</text>
</comment>
<comment type="subcellular location">
    <subcellularLocation>
        <location evidence="2">Secreted</location>
    </subcellularLocation>
    <subcellularLocation>
        <location evidence="2">Host nucleus</location>
    </subcellularLocation>
</comment>
<comment type="domain">
    <text evidence="5">The RxLR-dEER motif acts to carry the protein into the host cell cytoplasm through binding to cell surface phosphatidylinositol-3-phosphate.</text>
</comment>
<comment type="similarity">
    <text evidence="4">Belongs to the RxLR effector family.</text>
</comment>
<keyword id="KW-1048">Host nucleus</keyword>
<keyword id="KW-0964">Secreted</keyword>
<keyword id="KW-0732">Signal</keyword>
<keyword id="KW-0843">Virulence</keyword>
<protein>
    <recommendedName>
        <fullName evidence="3">Secreted RxLR effector protein 117</fullName>
    </recommendedName>
</protein>
<proteinExistence type="evidence at transcript level"/>
<dbReference type="GO" id="GO:0005576">
    <property type="term" value="C:extracellular region"/>
    <property type="evidence" value="ECO:0007669"/>
    <property type="project" value="UniProtKB-SubCell"/>
</dbReference>
<dbReference type="GO" id="GO:0042025">
    <property type="term" value="C:host cell nucleus"/>
    <property type="evidence" value="ECO:0007669"/>
    <property type="project" value="UniProtKB-SubCell"/>
</dbReference>
<accession>P0CV47</accession>
<name>RL117_PLAVT</name>
<organism>
    <name type="scientific">Plasmopara viticola</name>
    <name type="common">Downy mildew of grapevine</name>
    <name type="synonym">Botrytis viticola</name>
    <dbReference type="NCBI Taxonomy" id="143451"/>
    <lineage>
        <taxon>Eukaryota</taxon>
        <taxon>Sar</taxon>
        <taxon>Stramenopiles</taxon>
        <taxon>Oomycota</taxon>
        <taxon>Peronosporales</taxon>
        <taxon>Peronosporaceae</taxon>
        <taxon>Plasmopara</taxon>
    </lineage>
</organism>
<gene>
    <name evidence="3" type="primary">RXLR117</name>
</gene>
<reference key="1">
    <citation type="journal article" date="2018" name="Front. Plant Sci.">
        <title>In planta functional analysis and subcellular localization of the oomycete pathogen Plasmopara viticola candidate RXLR effector repertoire.</title>
        <authorList>
            <person name="Liu Y."/>
            <person name="Lan X."/>
            <person name="Song S."/>
            <person name="Yin L."/>
            <person name="Dry I.B."/>
            <person name="Qu J."/>
            <person name="Xiang J."/>
            <person name="Lu J."/>
        </authorList>
    </citation>
    <scope>NUCLEOTIDE SEQUENCE [MRNA]</scope>
    <scope>DOMAIN</scope>
    <scope>FUNCTION</scope>
    <scope>SUBCELLULAR LOCATION</scope>
</reference>
<sequence>MRGAYYVLAALLVVASSQIAAEFGHQLPVYDDGIMAARNAVVKTLPKRYLRGGHDVHDDSANEERSLYSVLVSLINEGVMKLPRATEELNMMPRAADDVEVMFRPAEVNEEMPHITKEELKKASKSAKEALKKLWKPASRTAADGHASHDIPTGEKLYLDLEAWDIKEFHMRGGSVIKKHRSMIASVHQEFLNLCDPNLHPTAAETSLLWGMFHWKPELCTIEIHGRNLMRLAKRDVQKGVLKITSNELLDNQWNQLSDTHKLSVQNCLLNLYYQRWVRMYNIFKRNRPDLIAAPLNLELNLGTSSALALRKHSQVPSNAASTSNVKSSVITKRSKRTFDSNTGTISLSSKQAKMQSSKSVVPLLTGATTSGEHVVPMQNLKLSLGGPSGGFAPYEPPKAHSLKSLTPASTALTLEDSETKLSLGGIYDKRTDKAPSVP</sequence>
<feature type="signal peptide" evidence="1">
    <location>
        <begin position="1"/>
        <end position="21"/>
    </location>
</feature>
<feature type="chain" id="PRO_0000447956" description="Secreted RxLR effector protein 117">
    <location>
        <begin position="22"/>
        <end position="439"/>
    </location>
</feature>
<feature type="short sequence motif" description="RxLR-dEER" evidence="5">
    <location>
        <begin position="48"/>
        <end position="65"/>
    </location>
</feature>